<feature type="chain" id="PRO_0000234904" description="Large ribosomal subunit protein uL10">
    <location>
        <begin position="1"/>
        <end position="166"/>
    </location>
</feature>
<protein>
    <recommendedName>
        <fullName evidence="1">Large ribosomal subunit protein uL10</fullName>
    </recommendedName>
    <alternativeName>
        <fullName evidence="2">50S ribosomal protein L10</fullName>
    </alternativeName>
</protein>
<name>RL10_HYDCU</name>
<organism>
    <name type="scientific">Hydrogenovibrio crunogenus (strain DSM 25203 / XCL-2)</name>
    <name type="common">Thiomicrospira crunogena</name>
    <dbReference type="NCBI Taxonomy" id="317025"/>
    <lineage>
        <taxon>Bacteria</taxon>
        <taxon>Pseudomonadati</taxon>
        <taxon>Pseudomonadota</taxon>
        <taxon>Gammaproteobacteria</taxon>
        <taxon>Thiotrichales</taxon>
        <taxon>Piscirickettsiaceae</taxon>
        <taxon>Hydrogenovibrio</taxon>
    </lineage>
</organism>
<comment type="function">
    <text evidence="1">Forms part of the ribosomal stalk, playing a central role in the interaction of the ribosome with GTP-bound translation factors.</text>
</comment>
<comment type="subunit">
    <text evidence="1">Part of the ribosomal stalk of the 50S ribosomal subunit. The N-terminus interacts with L11 and the large rRNA to form the base of the stalk. The C-terminus forms an elongated spine to which L12 dimers bind in a sequential fashion forming a multimeric L10(L12)X complex.</text>
</comment>
<comment type="similarity">
    <text evidence="1">Belongs to the universal ribosomal protein uL10 family.</text>
</comment>
<reference key="1">
    <citation type="journal article" date="2006" name="PLoS Biol.">
        <title>The genome of deep-sea vent chemolithoautotroph Thiomicrospira crunogena XCL-2.</title>
        <authorList>
            <person name="Scott K.M."/>
            <person name="Sievert S.M."/>
            <person name="Abril F.N."/>
            <person name="Ball L.A."/>
            <person name="Barrett C.J."/>
            <person name="Blake R.A."/>
            <person name="Boller A.J."/>
            <person name="Chain P.S.G."/>
            <person name="Clark J.A."/>
            <person name="Davis C.R."/>
            <person name="Detter C."/>
            <person name="Do K.F."/>
            <person name="Dobrinski K.P."/>
            <person name="Faza B.I."/>
            <person name="Fitzpatrick K.A."/>
            <person name="Freyermuth S.K."/>
            <person name="Harmer T.L."/>
            <person name="Hauser L.J."/>
            <person name="Huegler M."/>
            <person name="Kerfeld C.A."/>
            <person name="Klotz M.G."/>
            <person name="Kong W.W."/>
            <person name="Land M."/>
            <person name="Lapidus A."/>
            <person name="Larimer F.W."/>
            <person name="Longo D.L."/>
            <person name="Lucas S."/>
            <person name="Malfatti S.A."/>
            <person name="Massey S.E."/>
            <person name="Martin D.D."/>
            <person name="McCuddin Z."/>
            <person name="Meyer F."/>
            <person name="Moore J.L."/>
            <person name="Ocampo L.H. Jr."/>
            <person name="Paul J.H."/>
            <person name="Paulsen I.T."/>
            <person name="Reep D.K."/>
            <person name="Ren Q."/>
            <person name="Ross R.L."/>
            <person name="Sato P.Y."/>
            <person name="Thomas P."/>
            <person name="Tinkham L.E."/>
            <person name="Zeruth G.T."/>
        </authorList>
    </citation>
    <scope>NUCLEOTIDE SEQUENCE [LARGE SCALE GENOMIC DNA]</scope>
    <source>
        <strain>DSM 25203 / XCL-2</strain>
    </source>
</reference>
<keyword id="KW-0687">Ribonucleoprotein</keyword>
<keyword id="KW-0689">Ribosomal protein</keyword>
<keyword id="KW-0694">RNA-binding</keyword>
<keyword id="KW-0699">rRNA-binding</keyword>
<accession>Q31IZ1</accession>
<sequence length="166" mass="17749">MALNIEDKKAVVEEVSAIIAEAGSMVAAEYRGLTVEQLTELRSKAREANVSVRVVKNTLVRRAVAGTKFEDMAETFSGPLIFAFSGEELGNAARVFKDFSKANEALVVKSLSIGEGVMDASQLAAIAALPTYDEALSKLLYVMKEPVAKVARGLVAIKEQKEAEAA</sequence>
<proteinExistence type="inferred from homology"/>
<gene>
    <name evidence="1" type="primary">rplJ</name>
    <name type="ordered locus">Tcr_0286</name>
</gene>
<dbReference type="EMBL" id="CP000109">
    <property type="protein sequence ID" value="ABB40882.1"/>
    <property type="molecule type" value="Genomic_DNA"/>
</dbReference>
<dbReference type="SMR" id="Q31IZ1"/>
<dbReference type="STRING" id="317025.Tcr_0286"/>
<dbReference type="KEGG" id="tcx:Tcr_0286"/>
<dbReference type="eggNOG" id="COG0244">
    <property type="taxonomic scope" value="Bacteria"/>
</dbReference>
<dbReference type="HOGENOM" id="CLU_092227_0_1_6"/>
<dbReference type="OrthoDB" id="9808307at2"/>
<dbReference type="GO" id="GO:0015934">
    <property type="term" value="C:large ribosomal subunit"/>
    <property type="evidence" value="ECO:0007669"/>
    <property type="project" value="InterPro"/>
</dbReference>
<dbReference type="GO" id="GO:0070180">
    <property type="term" value="F:large ribosomal subunit rRNA binding"/>
    <property type="evidence" value="ECO:0007669"/>
    <property type="project" value="UniProtKB-UniRule"/>
</dbReference>
<dbReference type="GO" id="GO:0003735">
    <property type="term" value="F:structural constituent of ribosome"/>
    <property type="evidence" value="ECO:0007669"/>
    <property type="project" value="InterPro"/>
</dbReference>
<dbReference type="GO" id="GO:0006412">
    <property type="term" value="P:translation"/>
    <property type="evidence" value="ECO:0007669"/>
    <property type="project" value="UniProtKB-UniRule"/>
</dbReference>
<dbReference type="CDD" id="cd05797">
    <property type="entry name" value="Ribosomal_L10"/>
    <property type="match status" value="1"/>
</dbReference>
<dbReference type="Gene3D" id="3.30.70.1730">
    <property type="match status" value="1"/>
</dbReference>
<dbReference type="Gene3D" id="6.10.250.2350">
    <property type="match status" value="1"/>
</dbReference>
<dbReference type="HAMAP" id="MF_00362">
    <property type="entry name" value="Ribosomal_uL10"/>
    <property type="match status" value="1"/>
</dbReference>
<dbReference type="InterPro" id="IPR001790">
    <property type="entry name" value="Ribosomal_uL10"/>
</dbReference>
<dbReference type="InterPro" id="IPR043141">
    <property type="entry name" value="Ribosomal_uL10-like_sf"/>
</dbReference>
<dbReference type="InterPro" id="IPR022973">
    <property type="entry name" value="Ribosomal_uL10_bac"/>
</dbReference>
<dbReference type="InterPro" id="IPR047865">
    <property type="entry name" value="Ribosomal_uL10_bac_type"/>
</dbReference>
<dbReference type="InterPro" id="IPR002363">
    <property type="entry name" value="Ribosomal_uL10_CS_bac"/>
</dbReference>
<dbReference type="NCBIfam" id="NF000955">
    <property type="entry name" value="PRK00099.1-1"/>
    <property type="match status" value="1"/>
</dbReference>
<dbReference type="PANTHER" id="PTHR11560">
    <property type="entry name" value="39S RIBOSOMAL PROTEIN L10, MITOCHONDRIAL"/>
    <property type="match status" value="1"/>
</dbReference>
<dbReference type="Pfam" id="PF00466">
    <property type="entry name" value="Ribosomal_L10"/>
    <property type="match status" value="1"/>
</dbReference>
<dbReference type="SUPFAM" id="SSF160369">
    <property type="entry name" value="Ribosomal protein L10-like"/>
    <property type="match status" value="1"/>
</dbReference>
<dbReference type="PROSITE" id="PS01109">
    <property type="entry name" value="RIBOSOMAL_L10"/>
    <property type="match status" value="1"/>
</dbReference>
<evidence type="ECO:0000255" key="1">
    <source>
        <dbReference type="HAMAP-Rule" id="MF_00362"/>
    </source>
</evidence>
<evidence type="ECO:0000305" key="2"/>